<evidence type="ECO:0000250" key="1"/>
<evidence type="ECO:0000305" key="2"/>
<name>UNG_BORBU</name>
<protein>
    <recommendedName>
        <fullName>Uracil-DNA glycosylase</fullName>
        <shortName>UDG</shortName>
        <ecNumber>3.2.2.27</ecNumber>
    </recommendedName>
</protein>
<keyword id="KW-0963">Cytoplasm</keyword>
<keyword id="KW-0227">DNA damage</keyword>
<keyword id="KW-0234">DNA repair</keyword>
<keyword id="KW-0378">Hydrolase</keyword>
<keyword id="KW-1185">Reference proteome</keyword>
<organism>
    <name type="scientific">Borreliella burgdorferi (strain ATCC 35210 / DSM 4680 / CIP 102532 / B31)</name>
    <name type="common">Borrelia burgdorferi</name>
    <dbReference type="NCBI Taxonomy" id="224326"/>
    <lineage>
        <taxon>Bacteria</taxon>
        <taxon>Pseudomonadati</taxon>
        <taxon>Spirochaetota</taxon>
        <taxon>Spirochaetia</taxon>
        <taxon>Spirochaetales</taxon>
        <taxon>Borreliaceae</taxon>
        <taxon>Borreliella</taxon>
    </lineage>
</organism>
<reference key="1">
    <citation type="journal article" date="1997" name="Nature">
        <title>Genomic sequence of a Lyme disease spirochaete, Borrelia burgdorferi.</title>
        <authorList>
            <person name="Fraser C.M."/>
            <person name="Casjens S."/>
            <person name="Huang W.M."/>
            <person name="Sutton G.G."/>
            <person name="Clayton R.A."/>
            <person name="Lathigra R."/>
            <person name="White O."/>
            <person name="Ketchum K.A."/>
            <person name="Dodson R.J."/>
            <person name="Hickey E.K."/>
            <person name="Gwinn M.L."/>
            <person name="Dougherty B.A."/>
            <person name="Tomb J.-F."/>
            <person name="Fleischmann R.D."/>
            <person name="Richardson D.L."/>
            <person name="Peterson J.D."/>
            <person name="Kerlavage A.R."/>
            <person name="Quackenbush J."/>
            <person name="Salzberg S.L."/>
            <person name="Hanson M."/>
            <person name="van Vugt R."/>
            <person name="Palmer N."/>
            <person name="Adams M.D."/>
            <person name="Gocayne J.D."/>
            <person name="Weidman J.F."/>
            <person name="Utterback T.R."/>
            <person name="Watthey L."/>
            <person name="McDonald L.A."/>
            <person name="Artiach P."/>
            <person name="Bowman C."/>
            <person name="Garland S.A."/>
            <person name="Fujii C."/>
            <person name="Cotton M.D."/>
            <person name="Horst K."/>
            <person name="Roberts K.M."/>
            <person name="Hatch B."/>
            <person name="Smith H.O."/>
            <person name="Venter J.C."/>
        </authorList>
    </citation>
    <scope>NUCLEOTIDE SEQUENCE [LARGE SCALE GENOMIC DNA]</scope>
    <source>
        <strain>ATCC 35210 / DSM 4680 / CIP 102532 / B31</strain>
    </source>
</reference>
<reference key="2">
    <citation type="submission" date="1996-06" db="EMBL/GenBank/DDBJ databases">
        <authorList>
            <person name="Gebbia J.A."/>
            <person name="Backenson P.B."/>
            <person name="Anda P."/>
            <person name="Coleman J.L."/>
            <person name="Benach J.L."/>
        </authorList>
    </citation>
    <scope>NUCLEOTIDE SEQUENCE [GENOMIC DNA] OF 1-80</scope>
    <source>
        <strain>ATCC 35210 / DSM 4680 / CIP 102532 / B31</strain>
    </source>
</reference>
<gene>
    <name type="primary">ung</name>
    <name type="synonym">udg</name>
    <name type="ordered locus">BB_0053</name>
</gene>
<proteinExistence type="inferred from homology"/>
<dbReference type="EC" id="3.2.2.27"/>
<dbReference type="EMBL" id="AE000783">
    <property type="protein sequence ID" value="AAC66430.1"/>
    <property type="molecule type" value="Genomic_DNA"/>
</dbReference>
<dbReference type="EMBL" id="U57684">
    <property type="protein sequence ID" value="AAB53935.1"/>
    <property type="molecule type" value="Genomic_DNA"/>
</dbReference>
<dbReference type="PIR" id="E70106">
    <property type="entry name" value="E70106"/>
</dbReference>
<dbReference type="RefSeq" id="NP_212187.1">
    <property type="nucleotide sequence ID" value="NC_001318.1"/>
</dbReference>
<dbReference type="RefSeq" id="WP_002656594.1">
    <property type="nucleotide sequence ID" value="NC_001318.1"/>
</dbReference>
<dbReference type="SMR" id="O51082"/>
<dbReference type="STRING" id="224326.BB_0053"/>
<dbReference type="PaxDb" id="224326-BB_0053"/>
<dbReference type="EnsemblBacteria" id="AAC66430">
    <property type="protein sequence ID" value="AAC66430"/>
    <property type="gene ID" value="BB_0053"/>
</dbReference>
<dbReference type="GeneID" id="56568164"/>
<dbReference type="KEGG" id="bbu:BB_0053"/>
<dbReference type="PATRIC" id="fig|224326.49.peg.451"/>
<dbReference type="HOGENOM" id="CLU_032162_3_0_12"/>
<dbReference type="OrthoDB" id="9804372at2"/>
<dbReference type="Proteomes" id="UP000001807">
    <property type="component" value="Chromosome"/>
</dbReference>
<dbReference type="GO" id="GO:0005737">
    <property type="term" value="C:cytoplasm"/>
    <property type="evidence" value="ECO:0007669"/>
    <property type="project" value="UniProtKB-SubCell"/>
</dbReference>
<dbReference type="GO" id="GO:0004844">
    <property type="term" value="F:uracil DNA N-glycosylase activity"/>
    <property type="evidence" value="ECO:0007669"/>
    <property type="project" value="UniProtKB-UniRule"/>
</dbReference>
<dbReference type="GO" id="GO:0097510">
    <property type="term" value="P:base-excision repair, AP site formation via deaminated base removal"/>
    <property type="evidence" value="ECO:0007669"/>
    <property type="project" value="TreeGrafter"/>
</dbReference>
<dbReference type="CDD" id="cd10027">
    <property type="entry name" value="UDG-F1-like"/>
    <property type="match status" value="1"/>
</dbReference>
<dbReference type="FunFam" id="3.40.470.10:FF:000001">
    <property type="entry name" value="Uracil-DNA glycosylase"/>
    <property type="match status" value="1"/>
</dbReference>
<dbReference type="Gene3D" id="3.40.470.10">
    <property type="entry name" value="Uracil-DNA glycosylase-like domain"/>
    <property type="match status" value="1"/>
</dbReference>
<dbReference type="HAMAP" id="MF_00148">
    <property type="entry name" value="UDG"/>
    <property type="match status" value="1"/>
</dbReference>
<dbReference type="InterPro" id="IPR002043">
    <property type="entry name" value="UDG_fam1"/>
</dbReference>
<dbReference type="InterPro" id="IPR018085">
    <property type="entry name" value="Ura-DNA_Glyclase_AS"/>
</dbReference>
<dbReference type="InterPro" id="IPR005122">
    <property type="entry name" value="Uracil-DNA_glycosylase-like"/>
</dbReference>
<dbReference type="InterPro" id="IPR036895">
    <property type="entry name" value="Uracil-DNA_glycosylase-like_sf"/>
</dbReference>
<dbReference type="NCBIfam" id="NF003588">
    <property type="entry name" value="PRK05254.1-1"/>
    <property type="match status" value="1"/>
</dbReference>
<dbReference type="NCBIfam" id="NF003589">
    <property type="entry name" value="PRK05254.1-2"/>
    <property type="match status" value="1"/>
</dbReference>
<dbReference type="NCBIfam" id="NF003591">
    <property type="entry name" value="PRK05254.1-4"/>
    <property type="match status" value="1"/>
</dbReference>
<dbReference type="NCBIfam" id="NF003592">
    <property type="entry name" value="PRK05254.1-5"/>
    <property type="match status" value="1"/>
</dbReference>
<dbReference type="NCBIfam" id="TIGR00628">
    <property type="entry name" value="ung"/>
    <property type="match status" value="1"/>
</dbReference>
<dbReference type="PANTHER" id="PTHR11264">
    <property type="entry name" value="URACIL-DNA GLYCOSYLASE"/>
    <property type="match status" value="1"/>
</dbReference>
<dbReference type="PANTHER" id="PTHR11264:SF0">
    <property type="entry name" value="URACIL-DNA GLYCOSYLASE"/>
    <property type="match status" value="1"/>
</dbReference>
<dbReference type="Pfam" id="PF03167">
    <property type="entry name" value="UDG"/>
    <property type="match status" value="1"/>
</dbReference>
<dbReference type="SMART" id="SM00986">
    <property type="entry name" value="UDG"/>
    <property type="match status" value="1"/>
</dbReference>
<dbReference type="SMART" id="SM00987">
    <property type="entry name" value="UreE_C"/>
    <property type="match status" value="1"/>
</dbReference>
<dbReference type="SUPFAM" id="SSF52141">
    <property type="entry name" value="Uracil-DNA glycosylase-like"/>
    <property type="match status" value="1"/>
</dbReference>
<dbReference type="PROSITE" id="PS00130">
    <property type="entry name" value="U_DNA_GLYCOSYLASE"/>
    <property type="match status" value="1"/>
</dbReference>
<sequence length="223" mass="25561">MKVKIEESWKEVLNNEFNKEYFKKLVKFIKHEYKTKNGKIFPPPKLIFNAFNSLPFKDIKVVIIGQDPYHGKNQANGLAFSVDSKIKIPPSLQNIFKEIEKSLKIKTIPNGDLKRWAIQGVFLINTILTVEEGKPSSHKAIGWEIFTDEVIKIISKNLKNIVFMLWGNLARSKKGLIDPTKHLILETSHPSPYSANNGFLGSNHFSSALDYLKKHNKNIINFQ</sequence>
<accession>O51082</accession>
<accession>Q44841</accession>
<feature type="chain" id="PRO_0000176071" description="Uracil-DNA glycosylase">
    <location>
        <begin position="1"/>
        <end position="223"/>
    </location>
</feature>
<feature type="active site" description="Proton acceptor" evidence="1">
    <location>
        <position position="67"/>
    </location>
</feature>
<feature type="sequence conflict" description="In Ref. 2; AAB53935." evidence="2" ref="2">
    <original>E</original>
    <variation>D</variation>
    <location>
        <position position="32"/>
    </location>
</feature>
<feature type="sequence conflict" description="In Ref. 2." evidence="2" ref="2">
    <original>NQANGLA</original>
    <variation>KPSXWTC</variation>
    <location>
        <begin position="73"/>
        <end position="79"/>
    </location>
</feature>
<comment type="function">
    <text evidence="1">Excises uracil residues from the DNA which can arise as a result of misincorporation of dUMP residues by DNA polymerase or due to deamination of cytosine.</text>
</comment>
<comment type="catalytic activity">
    <reaction>
        <text>Hydrolyzes single-stranded DNA or mismatched double-stranded DNA and polynucleotides, releasing free uracil.</text>
        <dbReference type="EC" id="3.2.2.27"/>
    </reaction>
</comment>
<comment type="subcellular location">
    <subcellularLocation>
        <location evidence="1">Cytoplasm</location>
    </subcellularLocation>
</comment>
<comment type="similarity">
    <text evidence="2">Belongs to the uracil-DNA glycosylase (UDG) superfamily. UNG family.</text>
</comment>